<dbReference type="EMBL" id="CP000300">
    <property type="protein sequence ID" value="ABE52826.1"/>
    <property type="molecule type" value="Genomic_DNA"/>
</dbReference>
<dbReference type="RefSeq" id="WP_011499968.1">
    <property type="nucleotide sequence ID" value="NC_007955.1"/>
</dbReference>
<dbReference type="SMR" id="Q12UQ0"/>
<dbReference type="STRING" id="259564.Mbur_1945"/>
<dbReference type="GeneID" id="3997846"/>
<dbReference type="KEGG" id="mbu:Mbur_1945"/>
<dbReference type="HOGENOM" id="CLU_074237_4_0_2"/>
<dbReference type="OrthoDB" id="8842at2157"/>
<dbReference type="Proteomes" id="UP000001979">
    <property type="component" value="Chromosome"/>
</dbReference>
<dbReference type="GO" id="GO:0015934">
    <property type="term" value="C:large ribosomal subunit"/>
    <property type="evidence" value="ECO:0007669"/>
    <property type="project" value="TreeGrafter"/>
</dbReference>
<dbReference type="GO" id="GO:0070180">
    <property type="term" value="F:large ribosomal subunit rRNA binding"/>
    <property type="evidence" value="ECO:0007669"/>
    <property type="project" value="UniProtKB-UniRule"/>
</dbReference>
<dbReference type="GO" id="GO:0003735">
    <property type="term" value="F:structural constituent of ribosome"/>
    <property type="evidence" value="ECO:0007669"/>
    <property type="project" value="InterPro"/>
</dbReference>
<dbReference type="GO" id="GO:0006412">
    <property type="term" value="P:translation"/>
    <property type="evidence" value="ECO:0007669"/>
    <property type="project" value="UniProtKB-UniRule"/>
</dbReference>
<dbReference type="CDD" id="cd00349">
    <property type="entry name" value="Ribosomal_L11"/>
    <property type="match status" value="1"/>
</dbReference>
<dbReference type="FunFam" id="1.10.10.250:FF:000006">
    <property type="entry name" value="50S ribosomal protein L11"/>
    <property type="match status" value="1"/>
</dbReference>
<dbReference type="FunFam" id="3.30.1550.10:FF:000007">
    <property type="entry name" value="50S ribosomal protein L11"/>
    <property type="match status" value="1"/>
</dbReference>
<dbReference type="Gene3D" id="1.10.10.250">
    <property type="entry name" value="Ribosomal protein L11, C-terminal domain"/>
    <property type="match status" value="1"/>
</dbReference>
<dbReference type="Gene3D" id="3.30.1550.10">
    <property type="entry name" value="Ribosomal protein L11/L12, N-terminal domain"/>
    <property type="match status" value="1"/>
</dbReference>
<dbReference type="HAMAP" id="MF_00736">
    <property type="entry name" value="Ribosomal_uL11"/>
    <property type="match status" value="1"/>
</dbReference>
<dbReference type="InterPro" id="IPR000911">
    <property type="entry name" value="Ribosomal_uL11"/>
</dbReference>
<dbReference type="InterPro" id="IPR020783">
    <property type="entry name" value="Ribosomal_uL11_C"/>
</dbReference>
<dbReference type="InterPro" id="IPR036769">
    <property type="entry name" value="Ribosomal_uL11_C_sf"/>
</dbReference>
<dbReference type="InterPro" id="IPR020784">
    <property type="entry name" value="Ribosomal_uL11_N"/>
</dbReference>
<dbReference type="InterPro" id="IPR036796">
    <property type="entry name" value="Ribosomal_uL11_N_sf"/>
</dbReference>
<dbReference type="NCBIfam" id="NF002232">
    <property type="entry name" value="PRK01143.1"/>
    <property type="match status" value="1"/>
</dbReference>
<dbReference type="PANTHER" id="PTHR11661">
    <property type="entry name" value="60S RIBOSOMAL PROTEIN L12"/>
    <property type="match status" value="1"/>
</dbReference>
<dbReference type="PANTHER" id="PTHR11661:SF1">
    <property type="entry name" value="LARGE RIBOSOMAL SUBUNIT PROTEIN UL11M"/>
    <property type="match status" value="1"/>
</dbReference>
<dbReference type="Pfam" id="PF00298">
    <property type="entry name" value="Ribosomal_L11"/>
    <property type="match status" value="1"/>
</dbReference>
<dbReference type="Pfam" id="PF03946">
    <property type="entry name" value="Ribosomal_L11_N"/>
    <property type="match status" value="1"/>
</dbReference>
<dbReference type="SMART" id="SM00649">
    <property type="entry name" value="RL11"/>
    <property type="match status" value="1"/>
</dbReference>
<dbReference type="SUPFAM" id="SSF54747">
    <property type="entry name" value="Ribosomal L11/L12e N-terminal domain"/>
    <property type="match status" value="1"/>
</dbReference>
<dbReference type="SUPFAM" id="SSF46906">
    <property type="entry name" value="Ribosomal protein L11, C-terminal domain"/>
    <property type="match status" value="1"/>
</dbReference>
<comment type="function">
    <text evidence="1">Forms part of the ribosomal stalk which helps the ribosome interact with GTP-bound translation factors.</text>
</comment>
<comment type="subunit">
    <text evidence="1">Part of the ribosomal stalk of the 50S ribosomal subunit. Interacts with L10 and the large rRNA to form the base of the stalk. L10 forms an elongated spine to which L12 dimers bind in a sequential fashion forming a multimeric L10(L12)X complex.</text>
</comment>
<comment type="similarity">
    <text evidence="1">Belongs to the universal ribosomal protein uL11 family.</text>
</comment>
<evidence type="ECO:0000255" key="1">
    <source>
        <dbReference type="HAMAP-Rule" id="MF_00736"/>
    </source>
</evidence>
<evidence type="ECO:0000305" key="2"/>
<keyword id="KW-0687">Ribonucleoprotein</keyword>
<keyword id="KW-0689">Ribosomal protein</keyword>
<keyword id="KW-0694">RNA-binding</keyword>
<keyword id="KW-0699">rRNA-binding</keyword>
<organism>
    <name type="scientific">Methanococcoides burtonii (strain DSM 6242 / NBRC 107633 / OCM 468 / ACE-M)</name>
    <dbReference type="NCBI Taxonomy" id="259564"/>
    <lineage>
        <taxon>Archaea</taxon>
        <taxon>Methanobacteriati</taxon>
        <taxon>Methanobacteriota</taxon>
        <taxon>Stenosarchaea group</taxon>
        <taxon>Methanomicrobia</taxon>
        <taxon>Methanosarcinales</taxon>
        <taxon>Methanosarcinaceae</taxon>
        <taxon>Methanococcoides</taxon>
    </lineage>
</organism>
<sequence length="161" mass="17039">MASVVEALIPGGKANPGPPLGPALGPLGVNIKDVIEKINEKTKDYNGMQVPVKVIVNDDKSVEIEVGTPPTSALILKELNIEKGSGESGTVVVGNLEIAQVAKIARMKKDDILSYSLKAAIKEVMGTCVPMGVTIENLDPRECQKAVDEGKFDESLTAEAW</sequence>
<proteinExistence type="inferred from homology"/>
<reference key="1">
    <citation type="journal article" date="2009" name="ISME J.">
        <title>The genome sequence of the psychrophilic archaeon, Methanococcoides burtonii: the role of genome evolution in cold adaptation.</title>
        <authorList>
            <person name="Allen M.A."/>
            <person name="Lauro F.M."/>
            <person name="Williams T.J."/>
            <person name="Burg D."/>
            <person name="Siddiqui K.S."/>
            <person name="De Francisci D."/>
            <person name="Chong K.W."/>
            <person name="Pilak O."/>
            <person name="Chew H.H."/>
            <person name="De Maere M.Z."/>
            <person name="Ting L."/>
            <person name="Katrib M."/>
            <person name="Ng C."/>
            <person name="Sowers K.R."/>
            <person name="Galperin M.Y."/>
            <person name="Anderson I.J."/>
            <person name="Ivanova N."/>
            <person name="Dalin E."/>
            <person name="Martinez M."/>
            <person name="Lapidus A."/>
            <person name="Hauser L."/>
            <person name="Land M."/>
            <person name="Thomas T."/>
            <person name="Cavicchioli R."/>
        </authorList>
    </citation>
    <scope>NUCLEOTIDE SEQUENCE [LARGE SCALE GENOMIC DNA]</scope>
    <source>
        <strain>DSM 6242 / NBRC 107633 / OCM 468 / ACE-M</strain>
    </source>
</reference>
<accession>Q12UQ0</accession>
<name>RL11_METBU</name>
<protein>
    <recommendedName>
        <fullName evidence="1">Large ribosomal subunit protein uL11</fullName>
    </recommendedName>
    <alternativeName>
        <fullName evidence="2">50S ribosomal protein L11</fullName>
    </alternativeName>
</protein>
<feature type="chain" id="PRO_0000258246" description="Large ribosomal subunit protein uL11">
    <location>
        <begin position="1"/>
        <end position="161"/>
    </location>
</feature>
<gene>
    <name evidence="1" type="primary">rpl11</name>
    <name type="ordered locus">Mbur_1945</name>
</gene>